<reference key="1">
    <citation type="journal article" date="2005" name="Genome Res.">
        <title>Living with two extremes: conclusions from the genome sequence of Natronomonas pharaonis.</title>
        <authorList>
            <person name="Falb M."/>
            <person name="Pfeiffer F."/>
            <person name="Palm P."/>
            <person name="Rodewald K."/>
            <person name="Hickmann V."/>
            <person name="Tittor J."/>
            <person name="Oesterhelt D."/>
        </authorList>
    </citation>
    <scope>NUCLEOTIDE SEQUENCE [LARGE SCALE GENOMIC DNA]</scope>
    <source>
        <strain>ATCC 35678 / DSM 2160 / CIP 103997 / JCM 8858 / NBRC 14720 / NCIMB 2260 / Gabara</strain>
    </source>
</reference>
<evidence type="ECO:0000255" key="1">
    <source>
        <dbReference type="HAMAP-Rule" id="MF_00278"/>
    </source>
</evidence>
<protein>
    <recommendedName>
        <fullName evidence="1">Imidazole glycerol phosphate synthase subunit HisH</fullName>
        <ecNumber evidence="1">4.3.2.10</ecNumber>
    </recommendedName>
    <alternativeName>
        <fullName evidence="1">IGP synthase glutaminase subunit</fullName>
        <ecNumber evidence="1">3.5.1.2</ecNumber>
    </alternativeName>
    <alternativeName>
        <fullName evidence="1">IGP synthase subunit HisH</fullName>
    </alternativeName>
    <alternativeName>
        <fullName evidence="1">ImGP synthase subunit HisH</fullName>
        <shortName evidence="1">IGPS subunit HisH</shortName>
    </alternativeName>
</protein>
<comment type="function">
    <text evidence="1">IGPS catalyzes the conversion of PRFAR and glutamine to IGP, AICAR and glutamate. The HisH subunit catalyzes the hydrolysis of glutamine to glutamate and ammonia as part of the synthesis of IGP and AICAR. The resulting ammonia molecule is channeled to the active site of HisF.</text>
</comment>
<comment type="catalytic activity">
    <reaction evidence="1">
        <text>5-[(5-phospho-1-deoxy-D-ribulos-1-ylimino)methylamino]-1-(5-phospho-beta-D-ribosyl)imidazole-4-carboxamide + L-glutamine = D-erythro-1-(imidazol-4-yl)glycerol 3-phosphate + 5-amino-1-(5-phospho-beta-D-ribosyl)imidazole-4-carboxamide + L-glutamate + H(+)</text>
        <dbReference type="Rhea" id="RHEA:24793"/>
        <dbReference type="ChEBI" id="CHEBI:15378"/>
        <dbReference type="ChEBI" id="CHEBI:29985"/>
        <dbReference type="ChEBI" id="CHEBI:58278"/>
        <dbReference type="ChEBI" id="CHEBI:58359"/>
        <dbReference type="ChEBI" id="CHEBI:58475"/>
        <dbReference type="ChEBI" id="CHEBI:58525"/>
        <dbReference type="EC" id="4.3.2.10"/>
    </reaction>
</comment>
<comment type="catalytic activity">
    <reaction evidence="1">
        <text>L-glutamine + H2O = L-glutamate + NH4(+)</text>
        <dbReference type="Rhea" id="RHEA:15889"/>
        <dbReference type="ChEBI" id="CHEBI:15377"/>
        <dbReference type="ChEBI" id="CHEBI:28938"/>
        <dbReference type="ChEBI" id="CHEBI:29985"/>
        <dbReference type="ChEBI" id="CHEBI:58359"/>
        <dbReference type="EC" id="3.5.1.2"/>
    </reaction>
</comment>
<comment type="pathway">
    <text evidence="1">Amino-acid biosynthesis; L-histidine biosynthesis; L-histidine from 5-phospho-alpha-D-ribose 1-diphosphate: step 5/9.</text>
</comment>
<comment type="subunit">
    <text evidence="1">Heterodimer of HisH and HisF.</text>
</comment>
<comment type="subcellular location">
    <subcellularLocation>
        <location evidence="1">Cytoplasm</location>
    </subcellularLocation>
</comment>
<sequence>MDTTDRTAEVVLVDYGLGNLRSVTRGLERAGAEVTLSADPDDFSAADGIVLPGVGAFSEGMENAGPFREALVAAAADGQPLFGICLGMQMLLTSSEEAETVGQGDVRGLDLVPGRNVRFDEGQKVPHMGWNELNVARDHPIVEGIDGEYAYFVHSYYAAPDDDAAVVATTDYSVEFPAIVANEAGNVFGTQFHPEKSGETGLQILQNFVDYCLER</sequence>
<proteinExistence type="inferred from homology"/>
<feature type="chain" id="PRO_0000231776" description="Imidazole glycerol phosphate synthase subunit HisH">
    <location>
        <begin position="1"/>
        <end position="215"/>
    </location>
</feature>
<feature type="domain" description="Glutamine amidotransferase type-1" evidence="1">
    <location>
        <begin position="9"/>
        <end position="215"/>
    </location>
</feature>
<feature type="active site" description="Nucleophile" evidence="1">
    <location>
        <position position="85"/>
    </location>
</feature>
<feature type="active site" evidence="1">
    <location>
        <position position="193"/>
    </location>
</feature>
<feature type="active site" evidence="1">
    <location>
        <position position="195"/>
    </location>
</feature>
<name>HIS5_NATPD</name>
<gene>
    <name evidence="1" type="primary">hisH</name>
    <name type="ordered locus">NP_0082A</name>
</gene>
<organism>
    <name type="scientific">Natronomonas pharaonis (strain ATCC 35678 / DSM 2160 / CIP 103997 / JCM 8858 / NBRC 14720 / NCIMB 2260 / Gabara)</name>
    <name type="common">Halobacterium pharaonis</name>
    <dbReference type="NCBI Taxonomy" id="348780"/>
    <lineage>
        <taxon>Archaea</taxon>
        <taxon>Methanobacteriati</taxon>
        <taxon>Methanobacteriota</taxon>
        <taxon>Stenosarchaea group</taxon>
        <taxon>Halobacteria</taxon>
        <taxon>Halobacteriales</taxon>
        <taxon>Haloarculaceae</taxon>
        <taxon>Natronomonas</taxon>
    </lineage>
</organism>
<keyword id="KW-0028">Amino-acid biosynthesis</keyword>
<keyword id="KW-0963">Cytoplasm</keyword>
<keyword id="KW-0315">Glutamine amidotransferase</keyword>
<keyword id="KW-0368">Histidine biosynthesis</keyword>
<keyword id="KW-0378">Hydrolase</keyword>
<keyword id="KW-0456">Lyase</keyword>
<keyword id="KW-1185">Reference proteome</keyword>
<accession>Q3IUP8</accession>
<dbReference type="EC" id="4.3.2.10" evidence="1"/>
<dbReference type="EC" id="3.5.1.2" evidence="1"/>
<dbReference type="EMBL" id="CR936257">
    <property type="protein sequence ID" value="CAI48132.1"/>
    <property type="molecule type" value="Genomic_DNA"/>
</dbReference>
<dbReference type="RefSeq" id="WP_011321771.1">
    <property type="nucleotide sequence ID" value="NC_007426.1"/>
</dbReference>
<dbReference type="SMR" id="Q3IUP8"/>
<dbReference type="STRING" id="348780.NP_0082A"/>
<dbReference type="EnsemblBacteria" id="CAI48132">
    <property type="protein sequence ID" value="CAI48132"/>
    <property type="gene ID" value="NP_0082A"/>
</dbReference>
<dbReference type="GeneID" id="3702821"/>
<dbReference type="KEGG" id="nph:NP_0082A"/>
<dbReference type="eggNOG" id="arCOG00089">
    <property type="taxonomic scope" value="Archaea"/>
</dbReference>
<dbReference type="HOGENOM" id="CLU_071837_2_1_2"/>
<dbReference type="OrthoDB" id="33401at2157"/>
<dbReference type="UniPathway" id="UPA00031">
    <property type="reaction ID" value="UER00010"/>
</dbReference>
<dbReference type="Proteomes" id="UP000002698">
    <property type="component" value="Chromosome"/>
</dbReference>
<dbReference type="GO" id="GO:0005737">
    <property type="term" value="C:cytoplasm"/>
    <property type="evidence" value="ECO:0007669"/>
    <property type="project" value="UniProtKB-SubCell"/>
</dbReference>
<dbReference type="GO" id="GO:0004359">
    <property type="term" value="F:glutaminase activity"/>
    <property type="evidence" value="ECO:0007669"/>
    <property type="project" value="UniProtKB-EC"/>
</dbReference>
<dbReference type="GO" id="GO:0000107">
    <property type="term" value="F:imidazoleglycerol-phosphate synthase activity"/>
    <property type="evidence" value="ECO:0007669"/>
    <property type="project" value="UniProtKB-UniRule"/>
</dbReference>
<dbReference type="GO" id="GO:0016829">
    <property type="term" value="F:lyase activity"/>
    <property type="evidence" value="ECO:0007669"/>
    <property type="project" value="UniProtKB-KW"/>
</dbReference>
<dbReference type="GO" id="GO:0000105">
    <property type="term" value="P:L-histidine biosynthetic process"/>
    <property type="evidence" value="ECO:0007669"/>
    <property type="project" value="UniProtKB-UniRule"/>
</dbReference>
<dbReference type="CDD" id="cd01748">
    <property type="entry name" value="GATase1_IGP_Synthase"/>
    <property type="match status" value="1"/>
</dbReference>
<dbReference type="Gene3D" id="3.40.50.880">
    <property type="match status" value="1"/>
</dbReference>
<dbReference type="HAMAP" id="MF_00278">
    <property type="entry name" value="HisH"/>
    <property type="match status" value="1"/>
</dbReference>
<dbReference type="InterPro" id="IPR029062">
    <property type="entry name" value="Class_I_gatase-like"/>
</dbReference>
<dbReference type="InterPro" id="IPR017926">
    <property type="entry name" value="GATASE"/>
</dbReference>
<dbReference type="InterPro" id="IPR010139">
    <property type="entry name" value="Imidazole-glycPsynth_HisH"/>
</dbReference>
<dbReference type="NCBIfam" id="TIGR01855">
    <property type="entry name" value="IMP_synth_hisH"/>
    <property type="match status" value="1"/>
</dbReference>
<dbReference type="PANTHER" id="PTHR42701">
    <property type="entry name" value="IMIDAZOLE GLYCEROL PHOSPHATE SYNTHASE SUBUNIT HISH"/>
    <property type="match status" value="1"/>
</dbReference>
<dbReference type="PANTHER" id="PTHR42701:SF1">
    <property type="entry name" value="IMIDAZOLE GLYCEROL PHOSPHATE SYNTHASE SUBUNIT HISH"/>
    <property type="match status" value="1"/>
</dbReference>
<dbReference type="Pfam" id="PF00117">
    <property type="entry name" value="GATase"/>
    <property type="match status" value="1"/>
</dbReference>
<dbReference type="PIRSF" id="PIRSF000495">
    <property type="entry name" value="Amidotransf_hisH"/>
    <property type="match status" value="1"/>
</dbReference>
<dbReference type="SMART" id="SM01211">
    <property type="entry name" value="GATase_5"/>
    <property type="match status" value="1"/>
</dbReference>
<dbReference type="SUPFAM" id="SSF52317">
    <property type="entry name" value="Class I glutamine amidotransferase-like"/>
    <property type="match status" value="1"/>
</dbReference>
<dbReference type="PROSITE" id="PS51273">
    <property type="entry name" value="GATASE_TYPE_1"/>
    <property type="match status" value="1"/>
</dbReference>